<evidence type="ECO:0000255" key="1">
    <source>
        <dbReference type="HAMAP-Rule" id="MF_00328"/>
    </source>
</evidence>
<proteinExistence type="inferred from homology"/>
<protein>
    <recommendedName>
        <fullName evidence="1">Guanylate kinase</fullName>
        <ecNumber evidence="1">2.7.4.8</ecNumber>
    </recommendedName>
    <alternativeName>
        <fullName evidence="1">GMP kinase</fullName>
    </alternativeName>
</protein>
<sequence>MSERGLLIVFSGPSGVGKGTVRQEIFSTPDHKFEYSVSMTTRPQRPGEVDGVDYFFRTREEFEELIKTGQMLEYAEYVGNYYGTPLTYVNETLDKGIDVFLEIEVQGALQVKSKVPDGVFVFLTPPDLDELEDRLVGRGTDSQEVIAQRIERAKEEIALMREYDYAVVNDEVALAAERVKRIIETEHFRVERVIGRYDKMIKITKNPFKAK</sequence>
<accession>Q1JKP6</accession>
<organism>
    <name type="scientific">Streptococcus pyogenes serotype M12 (strain MGAS9429)</name>
    <dbReference type="NCBI Taxonomy" id="370551"/>
    <lineage>
        <taxon>Bacteria</taxon>
        <taxon>Bacillati</taxon>
        <taxon>Bacillota</taxon>
        <taxon>Bacilli</taxon>
        <taxon>Lactobacillales</taxon>
        <taxon>Streptococcaceae</taxon>
        <taxon>Streptococcus</taxon>
    </lineage>
</organism>
<dbReference type="EC" id="2.7.4.8" evidence="1"/>
<dbReference type="EMBL" id="CP000259">
    <property type="protein sequence ID" value="ABF32523.1"/>
    <property type="molecule type" value="Genomic_DNA"/>
</dbReference>
<dbReference type="RefSeq" id="WP_002983649.1">
    <property type="nucleotide sequence ID" value="NC_008021.1"/>
</dbReference>
<dbReference type="SMR" id="Q1JKP6"/>
<dbReference type="GeneID" id="69900497"/>
<dbReference type="KEGG" id="spk:MGAS9429_Spy1336"/>
<dbReference type="HOGENOM" id="CLU_001715_1_2_9"/>
<dbReference type="Proteomes" id="UP000002433">
    <property type="component" value="Chromosome"/>
</dbReference>
<dbReference type="GO" id="GO:0005829">
    <property type="term" value="C:cytosol"/>
    <property type="evidence" value="ECO:0007669"/>
    <property type="project" value="TreeGrafter"/>
</dbReference>
<dbReference type="GO" id="GO:0005524">
    <property type="term" value="F:ATP binding"/>
    <property type="evidence" value="ECO:0007669"/>
    <property type="project" value="UniProtKB-UniRule"/>
</dbReference>
<dbReference type="GO" id="GO:0004385">
    <property type="term" value="F:guanylate kinase activity"/>
    <property type="evidence" value="ECO:0007669"/>
    <property type="project" value="UniProtKB-UniRule"/>
</dbReference>
<dbReference type="CDD" id="cd00071">
    <property type="entry name" value="GMPK"/>
    <property type="match status" value="1"/>
</dbReference>
<dbReference type="FunFam" id="3.40.50.300:FF:000855">
    <property type="entry name" value="Guanylate kinase"/>
    <property type="match status" value="1"/>
</dbReference>
<dbReference type="FunFam" id="3.30.63.10:FF:000002">
    <property type="entry name" value="Guanylate kinase 1"/>
    <property type="match status" value="1"/>
</dbReference>
<dbReference type="Gene3D" id="3.30.63.10">
    <property type="entry name" value="Guanylate Kinase phosphate binding domain"/>
    <property type="match status" value="1"/>
</dbReference>
<dbReference type="Gene3D" id="3.40.50.300">
    <property type="entry name" value="P-loop containing nucleotide triphosphate hydrolases"/>
    <property type="match status" value="2"/>
</dbReference>
<dbReference type="HAMAP" id="MF_00328">
    <property type="entry name" value="Guanylate_kinase"/>
    <property type="match status" value="1"/>
</dbReference>
<dbReference type="InterPro" id="IPR008145">
    <property type="entry name" value="GK/Ca_channel_bsu"/>
</dbReference>
<dbReference type="InterPro" id="IPR008144">
    <property type="entry name" value="Guanylate_kin-like_dom"/>
</dbReference>
<dbReference type="InterPro" id="IPR017665">
    <property type="entry name" value="Guanylate_kinase"/>
</dbReference>
<dbReference type="InterPro" id="IPR020590">
    <property type="entry name" value="Guanylate_kinase_CS"/>
</dbReference>
<dbReference type="InterPro" id="IPR027417">
    <property type="entry name" value="P-loop_NTPase"/>
</dbReference>
<dbReference type="NCBIfam" id="TIGR03263">
    <property type="entry name" value="guanyl_kin"/>
    <property type="match status" value="1"/>
</dbReference>
<dbReference type="PANTHER" id="PTHR23117:SF13">
    <property type="entry name" value="GUANYLATE KINASE"/>
    <property type="match status" value="1"/>
</dbReference>
<dbReference type="PANTHER" id="PTHR23117">
    <property type="entry name" value="GUANYLATE KINASE-RELATED"/>
    <property type="match status" value="1"/>
</dbReference>
<dbReference type="Pfam" id="PF00625">
    <property type="entry name" value="Guanylate_kin"/>
    <property type="match status" value="1"/>
</dbReference>
<dbReference type="SMART" id="SM00072">
    <property type="entry name" value="GuKc"/>
    <property type="match status" value="1"/>
</dbReference>
<dbReference type="SUPFAM" id="SSF52540">
    <property type="entry name" value="P-loop containing nucleoside triphosphate hydrolases"/>
    <property type="match status" value="1"/>
</dbReference>
<dbReference type="PROSITE" id="PS00856">
    <property type="entry name" value="GUANYLATE_KINASE_1"/>
    <property type="match status" value="1"/>
</dbReference>
<dbReference type="PROSITE" id="PS50052">
    <property type="entry name" value="GUANYLATE_KINASE_2"/>
    <property type="match status" value="1"/>
</dbReference>
<keyword id="KW-0067">ATP-binding</keyword>
<keyword id="KW-0963">Cytoplasm</keyword>
<keyword id="KW-0418">Kinase</keyword>
<keyword id="KW-0547">Nucleotide-binding</keyword>
<keyword id="KW-0808">Transferase</keyword>
<name>KGUA_STRPC</name>
<comment type="function">
    <text evidence="1">Essential for recycling GMP and indirectly, cGMP.</text>
</comment>
<comment type="catalytic activity">
    <reaction evidence="1">
        <text>GMP + ATP = GDP + ADP</text>
        <dbReference type="Rhea" id="RHEA:20780"/>
        <dbReference type="ChEBI" id="CHEBI:30616"/>
        <dbReference type="ChEBI" id="CHEBI:58115"/>
        <dbReference type="ChEBI" id="CHEBI:58189"/>
        <dbReference type="ChEBI" id="CHEBI:456216"/>
        <dbReference type="EC" id="2.7.4.8"/>
    </reaction>
</comment>
<comment type="subcellular location">
    <subcellularLocation>
        <location evidence="1">Cytoplasm</location>
    </subcellularLocation>
</comment>
<comment type="similarity">
    <text evidence="1">Belongs to the guanylate kinase family.</text>
</comment>
<reference key="1">
    <citation type="journal article" date="2006" name="Proc. Natl. Acad. Sci. U.S.A.">
        <title>Molecular genetic anatomy of inter- and intraserotype variation in the human bacterial pathogen group A Streptococcus.</title>
        <authorList>
            <person name="Beres S.B."/>
            <person name="Richter E.W."/>
            <person name="Nagiec M.J."/>
            <person name="Sumby P."/>
            <person name="Porcella S.F."/>
            <person name="DeLeo F.R."/>
            <person name="Musser J.M."/>
        </authorList>
    </citation>
    <scope>NUCLEOTIDE SEQUENCE [LARGE SCALE GENOMIC DNA]</scope>
    <source>
        <strain>MGAS9429</strain>
    </source>
</reference>
<feature type="chain" id="PRO_0000266414" description="Guanylate kinase">
    <location>
        <begin position="1"/>
        <end position="211"/>
    </location>
</feature>
<feature type="domain" description="Guanylate kinase-like" evidence="1">
    <location>
        <begin position="5"/>
        <end position="184"/>
    </location>
</feature>
<feature type="binding site" evidence="1">
    <location>
        <begin position="12"/>
        <end position="19"/>
    </location>
    <ligand>
        <name>ATP</name>
        <dbReference type="ChEBI" id="CHEBI:30616"/>
    </ligand>
</feature>
<gene>
    <name evidence="1" type="primary">gmk</name>
    <name type="ordered locus">MGAS9429_Spy1336</name>
</gene>